<proteinExistence type="inferred from homology"/>
<gene>
    <name evidence="1" type="primary">rpl37ae</name>
    <name type="ordered locus">Maeo_0179</name>
</gene>
<accession>A6UTE9</accession>
<sequence length="96" mass="10696">MVEFSHTKKIGSAGRFGARYGRKVRVRVRDVEIKQKKAYKCPVCGFMKLKRISTSIWECKKCGAKMAGGAYTPETGAGKVVAKAIRRVIESKTKEI</sequence>
<organism>
    <name type="scientific">Methanococcus aeolicus (strain ATCC BAA-1280 / DSM 17508 / OCM 812 / Nankai-3)</name>
    <dbReference type="NCBI Taxonomy" id="419665"/>
    <lineage>
        <taxon>Archaea</taxon>
        <taxon>Methanobacteriati</taxon>
        <taxon>Methanobacteriota</taxon>
        <taxon>Methanomada group</taxon>
        <taxon>Methanococci</taxon>
        <taxon>Methanococcales</taxon>
        <taxon>Methanococcaceae</taxon>
        <taxon>Methanococcus</taxon>
    </lineage>
</organism>
<name>RL37A_META3</name>
<protein>
    <recommendedName>
        <fullName evidence="1">Large ribosomal subunit protein eL43</fullName>
    </recommendedName>
    <alternativeName>
        <fullName evidence="2">50S ribosomal protein L37Ae</fullName>
    </alternativeName>
    <alternativeName>
        <fullName evidence="1">Ribosomal protein L43e</fullName>
    </alternativeName>
</protein>
<feature type="chain" id="PRO_1000005035" description="Large ribosomal subunit protein eL43">
    <location>
        <begin position="1"/>
        <end position="96"/>
    </location>
</feature>
<feature type="zinc finger region" description="C4-type" evidence="1">
    <location>
        <begin position="41"/>
        <end position="62"/>
    </location>
</feature>
<reference key="1">
    <citation type="submission" date="2007-06" db="EMBL/GenBank/DDBJ databases">
        <title>Complete sequence of Methanococcus aeolicus Nankai-3.</title>
        <authorList>
            <consortium name="US DOE Joint Genome Institute"/>
            <person name="Copeland A."/>
            <person name="Lucas S."/>
            <person name="Lapidus A."/>
            <person name="Barry K."/>
            <person name="Glavina del Rio T."/>
            <person name="Dalin E."/>
            <person name="Tice H."/>
            <person name="Pitluck S."/>
            <person name="Chain P."/>
            <person name="Malfatti S."/>
            <person name="Shin M."/>
            <person name="Vergez L."/>
            <person name="Schmutz J."/>
            <person name="Larimer F."/>
            <person name="Land M."/>
            <person name="Hauser L."/>
            <person name="Kyrpides N."/>
            <person name="Lykidis A."/>
            <person name="Sieprawska-Lupa M."/>
            <person name="Whitman W.B."/>
            <person name="Richardson P."/>
        </authorList>
    </citation>
    <scope>NUCLEOTIDE SEQUENCE [LARGE SCALE GENOMIC DNA]</scope>
    <source>
        <strain>ATCC BAA-1280 / DSM 17508 / OCM 812 / Nankai-3</strain>
    </source>
</reference>
<keyword id="KW-0479">Metal-binding</keyword>
<keyword id="KW-0687">Ribonucleoprotein</keyword>
<keyword id="KW-0689">Ribosomal protein</keyword>
<keyword id="KW-0694">RNA-binding</keyword>
<keyword id="KW-0862">Zinc</keyword>
<keyword id="KW-0863">Zinc-finger</keyword>
<evidence type="ECO:0000255" key="1">
    <source>
        <dbReference type="HAMAP-Rule" id="MF_00327"/>
    </source>
</evidence>
<evidence type="ECO:0000305" key="2"/>
<dbReference type="EMBL" id="CP000743">
    <property type="protein sequence ID" value="ABR55771.1"/>
    <property type="molecule type" value="Genomic_DNA"/>
</dbReference>
<dbReference type="RefSeq" id="WP_011972903.1">
    <property type="nucleotide sequence ID" value="NC_009635.1"/>
</dbReference>
<dbReference type="SMR" id="A6UTE9"/>
<dbReference type="STRING" id="419665.Maeo_0179"/>
<dbReference type="GeneID" id="5326977"/>
<dbReference type="KEGG" id="mae:Maeo_0179"/>
<dbReference type="eggNOG" id="arCOG04208">
    <property type="taxonomic scope" value="Archaea"/>
</dbReference>
<dbReference type="HOGENOM" id="CLU_141199_2_0_2"/>
<dbReference type="OrthoDB" id="372011at2157"/>
<dbReference type="Proteomes" id="UP000001106">
    <property type="component" value="Chromosome"/>
</dbReference>
<dbReference type="GO" id="GO:1990904">
    <property type="term" value="C:ribonucleoprotein complex"/>
    <property type="evidence" value="ECO:0007669"/>
    <property type="project" value="UniProtKB-KW"/>
</dbReference>
<dbReference type="GO" id="GO:0005840">
    <property type="term" value="C:ribosome"/>
    <property type="evidence" value="ECO:0007669"/>
    <property type="project" value="UniProtKB-KW"/>
</dbReference>
<dbReference type="GO" id="GO:0070180">
    <property type="term" value="F:large ribosomal subunit rRNA binding"/>
    <property type="evidence" value="ECO:0007669"/>
    <property type="project" value="UniProtKB-UniRule"/>
</dbReference>
<dbReference type="GO" id="GO:0003735">
    <property type="term" value="F:structural constituent of ribosome"/>
    <property type="evidence" value="ECO:0007669"/>
    <property type="project" value="InterPro"/>
</dbReference>
<dbReference type="GO" id="GO:0008270">
    <property type="term" value="F:zinc ion binding"/>
    <property type="evidence" value="ECO:0007669"/>
    <property type="project" value="UniProtKB-UniRule"/>
</dbReference>
<dbReference type="GO" id="GO:0006412">
    <property type="term" value="P:translation"/>
    <property type="evidence" value="ECO:0007669"/>
    <property type="project" value="UniProtKB-UniRule"/>
</dbReference>
<dbReference type="Gene3D" id="2.20.25.30">
    <property type="match status" value="1"/>
</dbReference>
<dbReference type="HAMAP" id="MF_00327">
    <property type="entry name" value="Ribosomal_eL43"/>
    <property type="match status" value="1"/>
</dbReference>
<dbReference type="InterPro" id="IPR011331">
    <property type="entry name" value="Ribosomal_eL37/eL43"/>
</dbReference>
<dbReference type="InterPro" id="IPR002674">
    <property type="entry name" value="Ribosomal_eL43"/>
</dbReference>
<dbReference type="InterPro" id="IPR050522">
    <property type="entry name" value="Ribosomal_protein_eL43"/>
</dbReference>
<dbReference type="InterPro" id="IPR011332">
    <property type="entry name" value="Ribosomal_zn-bd"/>
</dbReference>
<dbReference type="NCBIfam" id="TIGR00280">
    <property type="entry name" value="eL43_euk_arch"/>
    <property type="match status" value="1"/>
</dbReference>
<dbReference type="NCBIfam" id="NF003058">
    <property type="entry name" value="PRK03976.1"/>
    <property type="match status" value="1"/>
</dbReference>
<dbReference type="PANTHER" id="PTHR48129">
    <property type="entry name" value="60S RIBOSOMAL PROTEIN L37A"/>
    <property type="match status" value="1"/>
</dbReference>
<dbReference type="PANTHER" id="PTHR48129:SF1">
    <property type="entry name" value="LARGE RIBOSOMAL SUBUNIT PROTEIN EL43"/>
    <property type="match status" value="1"/>
</dbReference>
<dbReference type="Pfam" id="PF01780">
    <property type="entry name" value="Ribosomal_L37ae"/>
    <property type="match status" value="1"/>
</dbReference>
<dbReference type="SUPFAM" id="SSF57829">
    <property type="entry name" value="Zn-binding ribosomal proteins"/>
    <property type="match status" value="1"/>
</dbReference>
<comment type="cofactor">
    <cofactor evidence="1">
        <name>Zn(2+)</name>
        <dbReference type="ChEBI" id="CHEBI:29105"/>
    </cofactor>
    <text evidence="1">Binds 1 zinc ion per subunit.</text>
</comment>
<comment type="similarity">
    <text evidence="1">Belongs to the eukaryotic ribosomal protein eL43 family.</text>
</comment>